<dbReference type="EMBL" id="AF152498">
    <property type="protein sequence ID" value="AAD43759.1"/>
    <property type="molecule type" value="mRNA"/>
</dbReference>
<dbReference type="EMBL" id="AF134474">
    <property type="protein sequence ID" value="AAP97251.1"/>
    <property type="molecule type" value="mRNA"/>
</dbReference>
<dbReference type="EMBL" id="AF217753">
    <property type="protein sequence ID" value="AAK51620.1"/>
    <property type="molecule type" value="mRNA"/>
</dbReference>
<dbReference type="EMBL" id="BC001186">
    <property type="protein sequence ID" value="AAH01186.1"/>
    <property type="molecule type" value="mRNA"/>
</dbReference>
<dbReference type="EMBL" id="AL117449">
    <property type="protein sequence ID" value="CAB55933.1"/>
    <property type="molecule type" value="mRNA"/>
</dbReference>
<dbReference type="CCDS" id="CCDS4247.1"/>
<dbReference type="PIR" id="T17243">
    <property type="entry name" value="T17243"/>
</dbReference>
<dbReference type="RefSeq" id="NP_056484.2">
    <property type="nucleotide sequence ID" value="NM_015669.5"/>
</dbReference>
<dbReference type="SMR" id="Q9Y5E4"/>
<dbReference type="BioGRID" id="117593">
    <property type="interactions" value="58"/>
</dbReference>
<dbReference type="FunCoup" id="Q9Y5E4">
    <property type="interactions" value="87"/>
</dbReference>
<dbReference type="IntAct" id="Q9Y5E4">
    <property type="interactions" value="14"/>
</dbReference>
<dbReference type="STRING" id="9606.ENSP00000231134"/>
<dbReference type="GlyConnect" id="1683">
    <property type="glycosylation" value="1 N-Linked glycan (1 site)"/>
</dbReference>
<dbReference type="GlyCosmos" id="Q9Y5E4">
    <property type="glycosylation" value="4 sites, 1 glycan"/>
</dbReference>
<dbReference type="GlyGen" id="Q9Y5E4">
    <property type="glycosylation" value="4 sites, 1 N-linked glycan (1 site)"/>
</dbReference>
<dbReference type="iPTMnet" id="Q9Y5E4"/>
<dbReference type="PhosphoSitePlus" id="Q9Y5E4"/>
<dbReference type="BioMuta" id="PCDHB5"/>
<dbReference type="DMDM" id="13431375"/>
<dbReference type="jPOST" id="Q9Y5E4"/>
<dbReference type="MassIVE" id="Q9Y5E4"/>
<dbReference type="PaxDb" id="9606-ENSP00000231134"/>
<dbReference type="PeptideAtlas" id="Q9Y5E4"/>
<dbReference type="ProteomicsDB" id="86343"/>
<dbReference type="Antibodypedia" id="2351">
    <property type="antibodies" value="103 antibodies from 18 providers"/>
</dbReference>
<dbReference type="DNASU" id="26167"/>
<dbReference type="Ensembl" id="ENST00000231134.8">
    <property type="protein sequence ID" value="ENSP00000231134.5"/>
    <property type="gene ID" value="ENSG00000113209.9"/>
</dbReference>
<dbReference type="Ensembl" id="ENST00000708353.1">
    <property type="protein sequence ID" value="ENSP00000517187.1"/>
    <property type="gene ID" value="ENSG00000291677.1"/>
</dbReference>
<dbReference type="GeneID" id="26167"/>
<dbReference type="KEGG" id="hsa:26167"/>
<dbReference type="MANE-Select" id="ENST00000231134.8">
    <property type="protein sequence ID" value="ENSP00000231134.5"/>
    <property type="RefSeq nucleotide sequence ID" value="NM_015669.5"/>
    <property type="RefSeq protein sequence ID" value="NP_056484.2"/>
</dbReference>
<dbReference type="UCSC" id="uc003liq.5">
    <property type="organism name" value="human"/>
</dbReference>
<dbReference type="AGR" id="HGNC:8690"/>
<dbReference type="CTD" id="26167"/>
<dbReference type="DisGeNET" id="26167"/>
<dbReference type="GeneCards" id="PCDHB5"/>
<dbReference type="HGNC" id="HGNC:8690">
    <property type="gene designation" value="PCDHB5"/>
</dbReference>
<dbReference type="HPA" id="ENSG00000113209">
    <property type="expression patterns" value="Low tissue specificity"/>
</dbReference>
<dbReference type="MIM" id="604967">
    <property type="type" value="gene"/>
</dbReference>
<dbReference type="MIM" id="606331">
    <property type="type" value="gene"/>
</dbReference>
<dbReference type="neXtProt" id="NX_Q9Y5E4"/>
<dbReference type="OpenTargets" id="ENSG00000113209"/>
<dbReference type="PharmGKB" id="PA33039"/>
<dbReference type="VEuPathDB" id="HostDB:ENSG00000113209"/>
<dbReference type="eggNOG" id="KOG3594">
    <property type="taxonomic scope" value="Eukaryota"/>
</dbReference>
<dbReference type="GeneTree" id="ENSGT00940000157793"/>
<dbReference type="HOGENOM" id="CLU_006480_3_0_1"/>
<dbReference type="InParanoid" id="Q9Y5E4"/>
<dbReference type="OMA" id="REVMCGT"/>
<dbReference type="OrthoDB" id="6252479at2759"/>
<dbReference type="PAN-GO" id="Q9Y5E4">
    <property type="GO annotations" value="2 GO annotations based on evolutionary models"/>
</dbReference>
<dbReference type="PhylomeDB" id="Q9Y5E4"/>
<dbReference type="TreeFam" id="TF332299"/>
<dbReference type="PathwayCommons" id="Q9Y5E4"/>
<dbReference type="SignaLink" id="Q9Y5E4"/>
<dbReference type="BioGRID-ORCS" id="26167">
    <property type="hits" value="9 hits in 1105 CRISPR screens"/>
</dbReference>
<dbReference type="ChiTaRS" id="PCDHB5">
    <property type="organism name" value="human"/>
</dbReference>
<dbReference type="GeneWiki" id="PCDHB5"/>
<dbReference type="GenomeRNAi" id="26167"/>
<dbReference type="Pharos" id="Q9Y5E4">
    <property type="development level" value="Tdark"/>
</dbReference>
<dbReference type="PRO" id="PR:Q9Y5E4"/>
<dbReference type="Proteomes" id="UP000005640">
    <property type="component" value="Chromosome 5"/>
</dbReference>
<dbReference type="RNAct" id="Q9Y5E4">
    <property type="molecule type" value="protein"/>
</dbReference>
<dbReference type="Bgee" id="ENSG00000113209">
    <property type="expression patterns" value="Expressed in sperm and 117 other cell types or tissues"/>
</dbReference>
<dbReference type="ExpressionAtlas" id="Q9Y5E4">
    <property type="expression patterns" value="baseline and differential"/>
</dbReference>
<dbReference type="GO" id="GO:0016020">
    <property type="term" value="C:membrane"/>
    <property type="evidence" value="ECO:0000303"/>
    <property type="project" value="UniProtKB"/>
</dbReference>
<dbReference type="GO" id="GO:0005886">
    <property type="term" value="C:plasma membrane"/>
    <property type="evidence" value="ECO:0000318"/>
    <property type="project" value="GO_Central"/>
</dbReference>
<dbReference type="GO" id="GO:0045202">
    <property type="term" value="C:synapse"/>
    <property type="evidence" value="ECO:0007669"/>
    <property type="project" value="GOC"/>
</dbReference>
<dbReference type="GO" id="GO:0005509">
    <property type="term" value="F:calcium ion binding"/>
    <property type="evidence" value="ECO:0007669"/>
    <property type="project" value="InterPro"/>
</dbReference>
<dbReference type="GO" id="GO:0016339">
    <property type="term" value="P:calcium-dependent cell-cell adhesion via plasma membrane cell adhesion molecules"/>
    <property type="evidence" value="ECO:0000303"/>
    <property type="project" value="UniProtKB"/>
</dbReference>
<dbReference type="GO" id="GO:0007155">
    <property type="term" value="P:cell adhesion"/>
    <property type="evidence" value="ECO:0000318"/>
    <property type="project" value="GO_Central"/>
</dbReference>
<dbReference type="GO" id="GO:0007268">
    <property type="term" value="P:chemical synaptic transmission"/>
    <property type="evidence" value="ECO:0000304"/>
    <property type="project" value="UniProtKB"/>
</dbReference>
<dbReference type="GO" id="GO:0007156">
    <property type="term" value="P:homophilic cell adhesion via plasma membrane adhesion molecules"/>
    <property type="evidence" value="ECO:0007669"/>
    <property type="project" value="InterPro"/>
</dbReference>
<dbReference type="GO" id="GO:0007416">
    <property type="term" value="P:synapse assembly"/>
    <property type="evidence" value="ECO:0000304"/>
    <property type="project" value="UniProtKB"/>
</dbReference>
<dbReference type="CDD" id="cd11304">
    <property type="entry name" value="Cadherin_repeat"/>
    <property type="match status" value="5"/>
</dbReference>
<dbReference type="FunFam" id="2.60.40.60:FF:000001">
    <property type="entry name" value="Protocadherin alpha 2"/>
    <property type="match status" value="1"/>
</dbReference>
<dbReference type="FunFam" id="2.60.40.60:FF:000002">
    <property type="entry name" value="Protocadherin alpha 2"/>
    <property type="match status" value="1"/>
</dbReference>
<dbReference type="FunFam" id="2.60.40.60:FF:000006">
    <property type="entry name" value="Protocadherin alpha 2"/>
    <property type="match status" value="1"/>
</dbReference>
<dbReference type="FunFam" id="2.60.40.60:FF:000046">
    <property type="entry name" value="Protocadherin beta 5"/>
    <property type="match status" value="1"/>
</dbReference>
<dbReference type="FunFam" id="2.60.40.60:FF:000309">
    <property type="entry name" value="Protocadherin beta-8"/>
    <property type="match status" value="1"/>
</dbReference>
<dbReference type="FunFam" id="2.60.40.60:FF:000018">
    <property type="entry name" value="Protocadherin gamma c3"/>
    <property type="match status" value="1"/>
</dbReference>
<dbReference type="Gene3D" id="2.60.40.60">
    <property type="entry name" value="Cadherins"/>
    <property type="match status" value="6"/>
</dbReference>
<dbReference type="InterPro" id="IPR002126">
    <property type="entry name" value="Cadherin-like_dom"/>
</dbReference>
<dbReference type="InterPro" id="IPR015919">
    <property type="entry name" value="Cadherin-like_sf"/>
</dbReference>
<dbReference type="InterPro" id="IPR032455">
    <property type="entry name" value="Cadherin_C"/>
</dbReference>
<dbReference type="InterPro" id="IPR020894">
    <property type="entry name" value="Cadherin_CS"/>
</dbReference>
<dbReference type="InterPro" id="IPR013164">
    <property type="entry name" value="Cadherin_N"/>
</dbReference>
<dbReference type="InterPro" id="IPR050174">
    <property type="entry name" value="Protocadherin/Cadherin-CA"/>
</dbReference>
<dbReference type="PANTHER" id="PTHR24028">
    <property type="entry name" value="CADHERIN-87A"/>
    <property type="match status" value="1"/>
</dbReference>
<dbReference type="PANTHER" id="PTHR24028:SF90">
    <property type="entry name" value="PROTOCADHERIN BETA-5"/>
    <property type="match status" value="1"/>
</dbReference>
<dbReference type="Pfam" id="PF00028">
    <property type="entry name" value="Cadherin"/>
    <property type="match status" value="5"/>
</dbReference>
<dbReference type="Pfam" id="PF08266">
    <property type="entry name" value="Cadherin_2"/>
    <property type="match status" value="1"/>
</dbReference>
<dbReference type="Pfam" id="PF16492">
    <property type="entry name" value="Cadherin_C_2"/>
    <property type="match status" value="1"/>
</dbReference>
<dbReference type="PRINTS" id="PR00205">
    <property type="entry name" value="CADHERIN"/>
</dbReference>
<dbReference type="SMART" id="SM00112">
    <property type="entry name" value="CA"/>
    <property type="match status" value="5"/>
</dbReference>
<dbReference type="SUPFAM" id="SSF49313">
    <property type="entry name" value="Cadherin-like"/>
    <property type="match status" value="6"/>
</dbReference>
<dbReference type="PROSITE" id="PS00232">
    <property type="entry name" value="CADHERIN_1"/>
    <property type="match status" value="5"/>
</dbReference>
<dbReference type="PROSITE" id="PS50268">
    <property type="entry name" value="CADHERIN_2"/>
    <property type="match status" value="6"/>
</dbReference>
<sequence>METALAKTPQKRQVMFLAILLLLWEAGSEAVRYSIPEETESGYSVANLAKDLGLGVGELATRGARMHYKGNKELLQLDIKTGNLLLYEKLDREVMCGATEPCILHFQLLLENPVQFFQTDLQLTDINDHAPEFPEKEMLLKIPESTQPGTVFPLKIAQDFDIGSNTVQNYTISPNSHFHVATHNRGDGRKYPELVLDKALDREERPELSLTLTALDGGAPPRSGTTTIRIVVLDNNDNAPEFLQSFYEVQVPENSPLNSLVVVVSARDLDAGAYGSVAYALFQGDEVTQPFVIDEKTAEIRLKRALDFEATPYYNVEIVATDGGGLSGKCTVAIEVVDVNDNAPELTMSTLSSPTPENAPETVVAVFSVSDPDSGDNGRMICSIQNDLPFLLKPTLKNFYTLVTQRTLDRESQAEYNITITVTDMGTPRLKTEHNITVLVSDVNDNAPAFTQTSYTLFVRENNSPALHIGSVSATDRDSGTNAQVTYSLLPPQNPHLRLASLVSINADNGHLFALRSLDYEALQAFEFRVGATDRGSPALSSEALVRVLVLDANDNSPFVLYPLQNGSAPCTELVPRAAEPGYLVTKVVAVDGDSGQNAWLSYQLLKATEPGLFSMWAHNGEVRTARLLSERDAAKHRLVVLVKDNGEPPRSATATLHVLLVDGFSQPYLPLPEAAPAQAQADSLTVYLVVALASVSSLFLFSVLLFVAVRLCRRSRAAPVGRCSVPEGPFPGHLVDVSGTGTLSQSYHYEVCLTGDSGAGEFKFLKPIIPNLLPQGAGEEIGKTAAFRNSFGLN</sequence>
<keyword id="KW-0007">Acetylation</keyword>
<keyword id="KW-0106">Calcium</keyword>
<keyword id="KW-0130">Cell adhesion</keyword>
<keyword id="KW-1003">Cell membrane</keyword>
<keyword id="KW-0325">Glycoprotein</keyword>
<keyword id="KW-0472">Membrane</keyword>
<keyword id="KW-1267">Proteomics identification</keyword>
<keyword id="KW-1185">Reference proteome</keyword>
<keyword id="KW-0677">Repeat</keyword>
<keyword id="KW-0732">Signal</keyword>
<keyword id="KW-0812">Transmembrane</keyword>
<keyword id="KW-1133">Transmembrane helix</keyword>
<evidence type="ECO:0000250" key="1"/>
<evidence type="ECO:0000250" key="2">
    <source>
        <dbReference type="UniProtKB" id="Q9Y5E7"/>
    </source>
</evidence>
<evidence type="ECO:0000255" key="3"/>
<evidence type="ECO:0000255" key="4">
    <source>
        <dbReference type="PROSITE-ProRule" id="PRU00043"/>
    </source>
</evidence>
<evidence type="ECO:0000269" key="5">
    <source>
    </source>
</evidence>
<evidence type="ECO:0000269" key="6">
    <source>
    </source>
</evidence>
<evidence type="ECO:0000269" key="7">
    <source ref="2"/>
</evidence>
<name>PCDB5_HUMAN</name>
<comment type="function">
    <text>Potential calcium-dependent cell-adhesion protein. May be involved in the establishment and maintenance of specific neuronal connections in the brain.</text>
</comment>
<comment type="interaction">
    <interactant intactId="EBI-1045222">
        <id>Q9Y5E4</id>
    </interactant>
    <interactant intactId="EBI-1038838">
        <id>Q13936</id>
        <label>CACNA1C</label>
    </interactant>
    <organismsDiffer>false</organismsDiffer>
    <experiments>4</experiments>
</comment>
<comment type="subcellular location">
    <subcellularLocation>
        <location evidence="1">Cell membrane</location>
        <topology evidence="1">Single-pass type I membrane protein</topology>
    </subcellularLocation>
</comment>
<protein>
    <recommendedName>
        <fullName>Protocadherin beta-5</fullName>
        <shortName>PCDH-beta-5</shortName>
    </recommendedName>
</protein>
<organism>
    <name type="scientific">Homo sapiens</name>
    <name type="common">Human</name>
    <dbReference type="NCBI Taxonomy" id="9606"/>
    <lineage>
        <taxon>Eukaryota</taxon>
        <taxon>Metazoa</taxon>
        <taxon>Chordata</taxon>
        <taxon>Craniata</taxon>
        <taxon>Vertebrata</taxon>
        <taxon>Euteleostomi</taxon>
        <taxon>Mammalia</taxon>
        <taxon>Eutheria</taxon>
        <taxon>Euarchontoglires</taxon>
        <taxon>Primates</taxon>
        <taxon>Haplorrhini</taxon>
        <taxon>Catarrhini</taxon>
        <taxon>Hominidae</taxon>
        <taxon>Homo</taxon>
    </lineage>
</organism>
<gene>
    <name type="primary">PCDHB5</name>
</gene>
<feature type="signal peptide" evidence="3">
    <location>
        <begin position="1"/>
        <end position="30"/>
    </location>
</feature>
<feature type="chain" id="PRO_0000003922" description="Protocadherin beta-5">
    <location>
        <begin position="31"/>
        <end position="795"/>
    </location>
</feature>
<feature type="topological domain" description="Extracellular" evidence="3">
    <location>
        <begin position="31"/>
        <end position="689"/>
    </location>
</feature>
<feature type="transmembrane region" description="Helical" evidence="3">
    <location>
        <begin position="690"/>
        <end position="710"/>
    </location>
</feature>
<feature type="topological domain" description="Cytoplasmic" evidence="3">
    <location>
        <begin position="711"/>
        <end position="795"/>
    </location>
</feature>
<feature type="domain" description="Cadherin 1" evidence="4">
    <location>
        <begin position="35"/>
        <end position="133"/>
    </location>
</feature>
<feature type="domain" description="Cadherin 2" evidence="4">
    <location>
        <begin position="138"/>
        <end position="242"/>
    </location>
</feature>
<feature type="domain" description="Cadherin 3" evidence="4">
    <location>
        <begin position="247"/>
        <end position="346"/>
    </location>
</feature>
<feature type="domain" description="Cadherin 4" evidence="4">
    <location>
        <begin position="351"/>
        <end position="450"/>
    </location>
</feature>
<feature type="domain" description="Cadherin 5" evidence="4">
    <location>
        <begin position="455"/>
        <end position="560"/>
    </location>
</feature>
<feature type="domain" description="Cadherin 6" evidence="4">
    <location>
        <begin position="567"/>
        <end position="670"/>
    </location>
</feature>
<feature type="modified residue" description="N6-acetyllysine" evidence="2">
    <location>
        <position position="296"/>
    </location>
</feature>
<feature type="glycosylation site" description="N-linked (GlcNAc...) asparagine" evidence="3">
    <location>
        <position position="169"/>
    </location>
</feature>
<feature type="glycosylation site" description="N-linked (GlcNAc...) asparagine" evidence="3">
    <location>
        <position position="417"/>
    </location>
</feature>
<feature type="glycosylation site" description="N-linked (GlcNAc...) asparagine" evidence="3">
    <location>
        <position position="435"/>
    </location>
</feature>
<feature type="glycosylation site" description="N-linked (GlcNAc...) asparagine" evidence="3">
    <location>
        <position position="566"/>
    </location>
</feature>
<feature type="sequence variant" id="VAR_033704" description="In dbSNP:rs17096901.">
    <original>I</original>
    <variation>T</variation>
    <location>
        <position position="156"/>
    </location>
</feature>
<feature type="sequence variant" id="VAR_048552" description="In dbSNP:rs400562." evidence="5 6 7">
    <original>P</original>
    <variation>S</variation>
    <location>
        <position position="720"/>
    </location>
</feature>
<proteinExistence type="evidence at protein level"/>
<accession>Q9Y5E4</accession>
<accession>Q549F4</accession>
<accession>Q9UFU9</accession>
<reference key="1">
    <citation type="journal article" date="1999" name="Cell">
        <title>A striking organization of a large family of human neural cadherin-like cell adhesion genes.</title>
        <authorList>
            <person name="Wu Q."/>
            <person name="Maniatis T."/>
        </authorList>
    </citation>
    <scope>NUCLEOTIDE SEQUENCE [MRNA]</scope>
    <scope>VARIANT SER-720</scope>
</reference>
<reference key="2">
    <citation type="submission" date="1999-03" db="EMBL/GenBank/DDBJ databases">
        <title>Cloning and characterization of a new human cDNA homologous to Rattus norvegicus protocadherin-3 (pcdh3).</title>
        <authorList>
            <person name="Ding J.B."/>
            <person name="Yu L."/>
            <person name="Zhao S.Y."/>
        </authorList>
    </citation>
    <scope>NUCLEOTIDE SEQUENCE [MRNA]</scope>
    <scope>VARIANT SER-720</scope>
</reference>
<reference key="3">
    <citation type="journal article" date="2001" name="FEBS Lett.">
        <title>The human and murine protocadherin-beta one-exon gene families show high evolutionary conservation, despite the difference in gene number.</title>
        <authorList>
            <person name="Vanhalst K."/>
            <person name="Kools P."/>
            <person name="Vanden Eynde E."/>
            <person name="van Roy F."/>
        </authorList>
    </citation>
    <scope>NUCLEOTIDE SEQUENCE [MRNA]</scope>
    <scope>VARIANT SER-720</scope>
</reference>
<reference key="4">
    <citation type="journal article" date="2004" name="Genome Res.">
        <title>The status, quality, and expansion of the NIH full-length cDNA project: the Mammalian Gene Collection (MGC).</title>
        <authorList>
            <consortium name="The MGC Project Team"/>
        </authorList>
    </citation>
    <scope>NUCLEOTIDE SEQUENCE [LARGE SCALE MRNA]</scope>
    <source>
        <tissue>Muscle</tissue>
    </source>
</reference>
<reference key="5">
    <citation type="journal article" date="2007" name="BMC Genomics">
        <title>The full-ORF clone resource of the German cDNA consortium.</title>
        <authorList>
            <person name="Bechtel S."/>
            <person name="Rosenfelder H."/>
            <person name="Duda A."/>
            <person name="Schmidt C.P."/>
            <person name="Ernst U."/>
            <person name="Wellenreuther R."/>
            <person name="Mehrle A."/>
            <person name="Schuster C."/>
            <person name="Bahr A."/>
            <person name="Bloecker H."/>
            <person name="Heubner D."/>
            <person name="Hoerlein A."/>
            <person name="Michel G."/>
            <person name="Wedler H."/>
            <person name="Koehrer K."/>
            <person name="Ottenwaelder B."/>
            <person name="Poustka A."/>
            <person name="Wiemann S."/>
            <person name="Schupp I."/>
        </authorList>
    </citation>
    <scope>NUCLEOTIDE SEQUENCE [LARGE SCALE MRNA] OF 95-795</scope>
    <source>
        <tissue>Uterus</tissue>
    </source>
</reference>